<protein>
    <recommendedName>
        <fullName evidence="1">Formate--tetrahydrofolate ligase</fullName>
        <ecNumber evidence="1">6.3.4.3</ecNumber>
    </recommendedName>
    <alternativeName>
        <fullName evidence="1">Formyltetrahydrofolate synthetase</fullName>
        <shortName evidence="1">FHS</shortName>
        <shortName evidence="1">FTHFS</shortName>
    </alternativeName>
</protein>
<sequence length="557" mass="60157">MFSDIEIARQAKLRKISEIAAELGLNEDSITLYGQYKAKIDLNANPQLQAQPDGKLILVTAISPSPAGEGKTTTTVGLGDALQRMGKRAVICLREPSMGPVFGMKGGAAGGGYAQVVPMEDINLHFTGDFASIALAHNLLAAMIDNHIHHGNALQIDPRQVTWKRVIDMNDRALRQVVIGLGGKVNGQPREDGFDIVVASEVMAVFCLADSLKDLRTRLGRIVVGYTYSGQPVTAQDLKAHGAMTVLLKDAIKPNLVQTLEHTPALLHGGPFANIAHGCNSVIATRTALKLGDYVVTEAGFGADLGAEKFIDIKCRKAGLHPDACVIVATIRALKYHGGADVSALSREDMLALDRGIANLEKHVENVTTHYGMPAVIALNRFDHDTEAELALVMKRMGEMGIKVVVAEHWAKGGAGAESLAAHVLQLIEGRSEGVRYVYESSETLWEKVNQVARKIYGAMDVHAPRPVRAMIDRLQDAGYGHYPICIAKTQYSFSTDASRRGVPHEHILTVRAVRLCAGAEFVVIICDDIMTMPGLPEEPCAIRMDIDDDGQVVGLY</sequence>
<dbReference type="EC" id="6.3.4.3" evidence="1"/>
<dbReference type="EMBL" id="CP000284">
    <property type="protein sequence ID" value="ABE50521.1"/>
    <property type="molecule type" value="Genomic_DNA"/>
</dbReference>
<dbReference type="RefSeq" id="WP_011480475.1">
    <property type="nucleotide sequence ID" value="NC_007947.1"/>
</dbReference>
<dbReference type="SMR" id="Q1GZ16"/>
<dbReference type="STRING" id="265072.Mfla_2254"/>
<dbReference type="KEGG" id="mfa:Mfla_2254"/>
<dbReference type="eggNOG" id="COG2759">
    <property type="taxonomic scope" value="Bacteria"/>
</dbReference>
<dbReference type="HOGENOM" id="CLU_003601_3_3_4"/>
<dbReference type="OrthoDB" id="9761733at2"/>
<dbReference type="UniPathway" id="UPA00193"/>
<dbReference type="Proteomes" id="UP000002440">
    <property type="component" value="Chromosome"/>
</dbReference>
<dbReference type="GO" id="GO:0005524">
    <property type="term" value="F:ATP binding"/>
    <property type="evidence" value="ECO:0007669"/>
    <property type="project" value="UniProtKB-UniRule"/>
</dbReference>
<dbReference type="GO" id="GO:0004329">
    <property type="term" value="F:formate-tetrahydrofolate ligase activity"/>
    <property type="evidence" value="ECO:0007669"/>
    <property type="project" value="UniProtKB-UniRule"/>
</dbReference>
<dbReference type="GO" id="GO:0035999">
    <property type="term" value="P:tetrahydrofolate interconversion"/>
    <property type="evidence" value="ECO:0007669"/>
    <property type="project" value="UniProtKB-UniRule"/>
</dbReference>
<dbReference type="CDD" id="cd00477">
    <property type="entry name" value="FTHFS"/>
    <property type="match status" value="1"/>
</dbReference>
<dbReference type="FunFam" id="3.30.1510.10:FF:000001">
    <property type="entry name" value="Formate--tetrahydrofolate ligase"/>
    <property type="match status" value="1"/>
</dbReference>
<dbReference type="Gene3D" id="3.30.1510.10">
    <property type="entry name" value="Domain 2, N(10)-formyltetrahydrofolate synthetase"/>
    <property type="match status" value="1"/>
</dbReference>
<dbReference type="Gene3D" id="3.10.410.10">
    <property type="entry name" value="Formyltetrahydrofolate synthetase, domain 3"/>
    <property type="match status" value="1"/>
</dbReference>
<dbReference type="Gene3D" id="3.40.50.300">
    <property type="entry name" value="P-loop containing nucleotide triphosphate hydrolases"/>
    <property type="match status" value="1"/>
</dbReference>
<dbReference type="HAMAP" id="MF_01543">
    <property type="entry name" value="FTHFS"/>
    <property type="match status" value="1"/>
</dbReference>
<dbReference type="InterPro" id="IPR000559">
    <property type="entry name" value="Formate_THF_ligase"/>
</dbReference>
<dbReference type="InterPro" id="IPR020628">
    <property type="entry name" value="Formate_THF_ligase_CS"/>
</dbReference>
<dbReference type="InterPro" id="IPR027417">
    <property type="entry name" value="P-loop_NTPase"/>
</dbReference>
<dbReference type="NCBIfam" id="NF010030">
    <property type="entry name" value="PRK13505.1"/>
    <property type="match status" value="1"/>
</dbReference>
<dbReference type="Pfam" id="PF01268">
    <property type="entry name" value="FTHFS"/>
    <property type="match status" value="1"/>
</dbReference>
<dbReference type="SUPFAM" id="SSF52540">
    <property type="entry name" value="P-loop containing nucleoside triphosphate hydrolases"/>
    <property type="match status" value="1"/>
</dbReference>
<dbReference type="PROSITE" id="PS00721">
    <property type="entry name" value="FTHFS_1"/>
    <property type="match status" value="1"/>
</dbReference>
<dbReference type="PROSITE" id="PS00722">
    <property type="entry name" value="FTHFS_2"/>
    <property type="match status" value="1"/>
</dbReference>
<gene>
    <name evidence="1" type="primary">fhs</name>
    <name type="ordered locus">Mfla_2254</name>
</gene>
<comment type="catalytic activity">
    <reaction evidence="1">
        <text>(6S)-5,6,7,8-tetrahydrofolate + formate + ATP = (6R)-10-formyltetrahydrofolate + ADP + phosphate</text>
        <dbReference type="Rhea" id="RHEA:20221"/>
        <dbReference type="ChEBI" id="CHEBI:15740"/>
        <dbReference type="ChEBI" id="CHEBI:30616"/>
        <dbReference type="ChEBI" id="CHEBI:43474"/>
        <dbReference type="ChEBI" id="CHEBI:57453"/>
        <dbReference type="ChEBI" id="CHEBI:195366"/>
        <dbReference type="ChEBI" id="CHEBI:456216"/>
        <dbReference type="EC" id="6.3.4.3"/>
    </reaction>
</comment>
<comment type="pathway">
    <text evidence="1">One-carbon metabolism; tetrahydrofolate interconversion.</text>
</comment>
<comment type="similarity">
    <text evidence="1">Belongs to the formate--tetrahydrofolate ligase family.</text>
</comment>
<organism>
    <name type="scientific">Methylobacillus flagellatus (strain ATCC 51484 / DSM 6875 / VKM B-1610 / KT)</name>
    <dbReference type="NCBI Taxonomy" id="265072"/>
    <lineage>
        <taxon>Bacteria</taxon>
        <taxon>Pseudomonadati</taxon>
        <taxon>Pseudomonadota</taxon>
        <taxon>Betaproteobacteria</taxon>
        <taxon>Nitrosomonadales</taxon>
        <taxon>Methylophilaceae</taxon>
        <taxon>Methylobacillus</taxon>
    </lineage>
</organism>
<accession>Q1GZ16</accession>
<feature type="chain" id="PRO_0000293047" description="Formate--tetrahydrofolate ligase">
    <location>
        <begin position="1"/>
        <end position="557"/>
    </location>
</feature>
<feature type="binding site" evidence="1">
    <location>
        <begin position="65"/>
        <end position="72"/>
    </location>
    <ligand>
        <name>ATP</name>
        <dbReference type="ChEBI" id="CHEBI:30616"/>
    </ligand>
</feature>
<evidence type="ECO:0000255" key="1">
    <source>
        <dbReference type="HAMAP-Rule" id="MF_01543"/>
    </source>
</evidence>
<name>FTHS_METFK</name>
<proteinExistence type="inferred from homology"/>
<keyword id="KW-0067">ATP-binding</keyword>
<keyword id="KW-0436">Ligase</keyword>
<keyword id="KW-0547">Nucleotide-binding</keyword>
<keyword id="KW-0554">One-carbon metabolism</keyword>
<keyword id="KW-1185">Reference proteome</keyword>
<reference key="1">
    <citation type="submission" date="2006-03" db="EMBL/GenBank/DDBJ databases">
        <title>Complete sequence of Methylobacillus flagellatus KT.</title>
        <authorList>
            <consortium name="US DOE Joint Genome Institute"/>
            <person name="Copeland A."/>
            <person name="Lucas S."/>
            <person name="Lapidus A."/>
            <person name="Barry K."/>
            <person name="Detter J.C."/>
            <person name="Glavina del Rio T."/>
            <person name="Hammon N."/>
            <person name="Israni S."/>
            <person name="Dalin E."/>
            <person name="Tice H."/>
            <person name="Pitluck S."/>
            <person name="Brettin T."/>
            <person name="Bruce D."/>
            <person name="Han C."/>
            <person name="Tapia R."/>
            <person name="Saunders E."/>
            <person name="Gilna P."/>
            <person name="Schmutz J."/>
            <person name="Larimer F."/>
            <person name="Land M."/>
            <person name="Kyrpides N."/>
            <person name="Anderson I."/>
            <person name="Richardson P."/>
        </authorList>
    </citation>
    <scope>NUCLEOTIDE SEQUENCE [LARGE SCALE GENOMIC DNA]</scope>
    <source>
        <strain>ATCC 51484 / DSM 6875 / VKM B-1610 / KT</strain>
    </source>
</reference>